<comment type="function">
    <text evidence="1 2 3 8 15 18">Involved in ubiquitination and subsequent proteasomal degradation of target proteins. Together with CUL1, RBX1 and a F-box protein, it forms a SCF E3 ubiquitin ligase complex. The functional specificity of this complex depends on the type of F-box protein. In the SCF complex, it serves as an adapter that links the F-box protein to CUL1. SCF(UFO) is required for vegetative and floral organ development as well as for male gametogenesis. SCF(TIR1) is involved in auxin signaling pathway. SCF(COI1) regulates responses to jasmonates. SCF(EID1) and SCF(AFR) are implicated in phytochrome A light signaling. SCF(ADO1), SCF(ADO2), SCF(ADO3) are related to the circadian clock. SCF(ORE9) seems to be involved in senescence. SCF(EBF1/EBF2) may regulate ethylene signaling. Plays a role during embryogenesis and early postembryonic development, especially during cell elongation and division. Contributes to the correct chromosome segregation during tetrad formation.</text>
</comment>
<comment type="pathway">
    <text>Protein modification; protein ubiquitination.</text>
</comment>
<comment type="subunit">
    <text evidence="1 4 5 6 7 9 10 11 12 13 14 16 17 19 20 21 22 23 24 25 26 27 28 29 30 31 32 33">Part of a SCF E3 ubiquitin ligase complex composed of SKP1, CUL1, RBX1 (RBX1A or RBX1B) and F-box proteins. Interacts with SKIP1, SKIP2, SKIP3, SKIP4, SKIP6, FIB1/SKIP7, SKIP8, PP2A11/SKIP10, SKIP11, PP2B11/SKIP12, PP2A14/SKIP13, SKIP14, SKIP15, SKIP16, SKIP19/FBL20, SKIP20, PP2B1/SKIP21, SKIP22, SKIP23, SKIP24, SKIP25, TULP10/SKIP26, SKIP27, SKIP28/MEE11, AFR/SKIP29, SKIP30, SKIP31, SKIP32/FBP7, SKIP33, SKIP35, ADO1/ZTL, ADO2/LKP2, ADO3/FKF1, AFR, COI1, DOR, EBF1, EBF2, EID1, ORE9, PP2A13/SKIP9, TIR1, UFO, SKP2A, CPR1/CPR30, FBL17, NUP58, At1g55000, At1g67340, At1g78100, At3g04660, At3g61590, At4g38940 and At5g49610. The SKP1A subunit of the SCF E3 ubiquitin ligase complex can interact directly with KIN10, KIN11 and the proteasome subunit PAD1. This interaction can be disrupted by PRL1. In case of polerovirus infection, part of a SCF P0 complex composed of the viral silencing suppressor P0, SKP1 and CUL1. Interacts with turnip yellows virus P0. Interacts with VBF and Agrobacterium virF. Binds to KIB1 (PubMed:28575660).</text>
</comment>
<comment type="interaction">
    <interactant intactId="EBI-532357">
        <id>Q39255</id>
    </interactant>
    <interactant intactId="EBI-300691">
        <id>Q94BT6</id>
        <label>ADO1</label>
    </interactant>
    <organismsDiffer>false</organismsDiffer>
    <experiments>9</experiments>
</comment>
<comment type="interaction">
    <interactant intactId="EBI-532357">
        <id>Q39255</id>
    </interactant>
    <interactant intactId="EBI-604438">
        <id>Q8LAW2</id>
        <label>AFR</label>
    </interactant>
    <organismsDiffer>false</organismsDiffer>
    <experiments>4</experiments>
</comment>
<comment type="interaction">
    <interactant intactId="EBI-532357">
        <id>Q39255</id>
    </interactant>
    <interactant intactId="EBI-15923123">
        <id>Q9SHY1</id>
        <label>At1g65740</label>
    </interactant>
    <organismsDiffer>false</organismsDiffer>
    <experiments>2</experiments>
</comment>
<comment type="interaction">
    <interactant intactId="EBI-532357">
        <id>Q39255</id>
    </interactant>
    <interactant intactId="EBI-401159">
        <id>O04197</id>
        <label>COI1</label>
    </interactant>
    <organismsDiffer>false</organismsDiffer>
    <experiments>11</experiments>
</comment>
<comment type="interaction">
    <interactant intactId="EBI-532357">
        <id>Q39255</id>
    </interactant>
    <interactant intactId="EBI-532411">
        <id>Q94AH6</id>
        <label>CUL1</label>
    </interactant>
    <organismsDiffer>false</organismsDiffer>
    <experiments>7</experiments>
</comment>
<comment type="interaction">
    <interactant intactId="EBI-532357">
        <id>Q39255</id>
    </interactant>
    <interactant intactId="EBI-401198">
        <id>Q9SKK0</id>
        <label>EBF1</label>
    </interactant>
    <organismsDiffer>false</organismsDiffer>
    <experiments>7</experiments>
</comment>
<comment type="interaction">
    <interactant intactId="EBI-532357">
        <id>Q39255</id>
    </interactant>
    <interactant intactId="EBI-687388">
        <id>Q8LEA8</id>
        <label>EID1</label>
    </interactant>
    <organismsDiffer>false</organismsDiffer>
    <experiments>4</experiments>
</comment>
<comment type="interaction">
    <interactant intactId="EBI-532357">
        <id>Q39255</id>
    </interactant>
    <interactant intactId="EBI-1235922">
        <id>Q8RWQ8</id>
        <label>FBX14</label>
    </interactant>
    <organismsDiffer>false</organismsDiffer>
    <experiments>3</experiments>
</comment>
<comment type="interaction">
    <interactant intactId="EBI-532357">
        <id>Q39255</id>
    </interactant>
    <interactant intactId="EBI-617479">
        <id>Q9ZR12</id>
        <label>GRH1</label>
    </interactant>
    <organismsDiffer>false</organismsDiffer>
    <experiments>3</experiments>
</comment>
<comment type="interaction">
    <interactant intactId="EBI-532357">
        <id>Q39255</id>
    </interactant>
    <interactant intactId="EBI-602959">
        <id>Q38825</id>
        <label>IAA7</label>
    </interactant>
    <organismsDiffer>false</organismsDiffer>
    <experiments>4</experiments>
</comment>
<comment type="interaction">
    <interactant intactId="EBI-532357">
        <id>Q39255</id>
    </interactant>
    <interactant intactId="EBI-25519488">
        <id>Q9SZU7</id>
        <label>KAI2</label>
    </interactant>
    <organismsDiffer>false</organismsDiffer>
    <experiments>3</experiments>
</comment>
<comment type="interaction">
    <interactant intactId="EBI-532357">
        <id>Q39255</id>
    </interactant>
    <interactant intactId="EBI-25529872">
        <id>Q9SIM9</id>
        <label>MAX2</label>
    </interactant>
    <organismsDiffer>false</organismsDiffer>
    <experiments>3</experiments>
</comment>
<comment type="interaction">
    <interactant intactId="EBI-532357">
        <id>Q39255</id>
    </interactant>
    <interactant intactId="EBI-604261">
        <id>Q9LEX0</id>
        <label>PP2A13</label>
    </interactant>
    <organismsDiffer>false</organismsDiffer>
    <experiments>4</experiments>
</comment>
<comment type="interaction">
    <interactant intactId="EBI-532357">
        <id>Q39255</id>
    </interactant>
    <interactant intactId="EBI-604228">
        <id>Q9FDX1</id>
        <label>SKIP1</label>
    </interactant>
    <organismsDiffer>false</organismsDiffer>
    <experiments>5</experiments>
</comment>
<comment type="interaction">
    <interactant intactId="EBI-532357">
        <id>Q39255</id>
    </interactant>
    <interactant intactId="EBI-591174">
        <id>O49279</id>
        <label>SKIP15</label>
    </interactant>
    <organismsDiffer>false</organismsDiffer>
    <experiments>4</experiments>
</comment>
<comment type="interaction">
    <interactant intactId="EBI-532357">
        <id>Q39255</id>
    </interactant>
    <interactant intactId="EBI-591107">
        <id>Q9FE83</id>
        <label>SKIP2</label>
    </interactant>
    <organismsDiffer>false</organismsDiffer>
    <experiments>3</experiments>
</comment>
<comment type="interaction">
    <interactant intactId="EBI-532357">
        <id>Q39255</id>
    </interactant>
    <interactant intactId="EBI-604427">
        <id>Q9ZU90</id>
        <label>SKIP28</label>
    </interactant>
    <organismsDiffer>false</organismsDiffer>
    <experiments>3</experiments>
</comment>
<comment type="interaction">
    <interactant intactId="EBI-532357">
        <id>Q39255</id>
    </interactant>
    <interactant intactId="EBI-307183">
        <id>Q570C0</id>
        <label>TIR1</label>
    </interactant>
    <organismsDiffer>false</organismsDiffer>
    <experiments>11</experiments>
</comment>
<comment type="interaction">
    <interactant intactId="EBI-532357">
        <id>Q39255</id>
    </interactant>
    <interactant intactId="EBI-590758">
        <id>Q39090</id>
        <label>UFO</label>
    </interactant>
    <organismsDiffer>false</organismsDiffer>
    <experiments>6</experiments>
</comment>
<comment type="interaction">
    <interactant intactId="EBI-532357">
        <id>Q39255</id>
    </interactant>
    <interactant intactId="EBI-605118">
        <id>P15597</id>
        <label>virF</label>
    </interactant>
    <organismsDiffer>true</organismsDiffer>
    <experiments>6</experiments>
</comment>
<comment type="interaction">
    <interactant intactId="EBI-532357">
        <id>Q39255</id>
    </interactant>
    <interactant intactId="EBI-848577">
        <id>Q65967</id>
    </interactant>
    <organismsDiffer>true</organismsDiffer>
    <experiments>3</experiments>
</comment>
<comment type="subcellular location">
    <subcellularLocation>
        <location evidence="6">Nucleus</location>
    </subcellularLocation>
    <subcellularLocation>
        <location evidence="6">Cytoplasm</location>
        <location evidence="6">Cytoskeleton</location>
        <location evidence="6">Spindle</location>
    </subcellularLocation>
    <subcellularLocation>
        <location evidence="6">Cytoplasm</location>
        <location evidence="6">Cytoskeleton</location>
        <location evidence="6">Phragmoplast</location>
    </subcellularLocation>
    <text>Associated to mitotic spindle and phragmoplasts during cell division.</text>
</comment>
<comment type="tissue specificity">
    <text evidence="4 15 18 19 34">Accumulates only in meristematic cells. Expressed in inflorescence, shoot and root apical meristems, as well as in developing organs such as gametocytes and seeds. Also detected in cortical layer and epidermis of roots, leaves, pith and vascular bundle of young stem, young floral buds and organ primordia, pollen and through the valve of siliques. Not detectable in mature root tissues.</text>
</comment>
<comment type="developmental stage">
    <text evidence="34">During flower development, expressed in the tapetal layer surrounding the male microsporocytes, and in the endothelium layer surrounding the embryo sac within the ovule. During embryogenesis, expressed in all cells of the embryo and in developing endosperm surrounding the embryo, at the time of free nuclei proliferation.</text>
</comment>
<comment type="similarity">
    <text evidence="39">Belongs to the SKP1 family.</text>
</comment>
<comment type="sequence caution" evidence="39">
    <conflict type="erroneous initiation">
        <sequence resource="EMBL-CDS" id="AAB38862"/>
    </conflict>
    <text>Truncated N-terminus.</text>
</comment>
<dbReference type="EMBL" id="U60981">
    <property type="protein sequence ID" value="AAB17535.1"/>
    <property type="molecule type" value="mRNA"/>
</dbReference>
<dbReference type="EMBL" id="U97020">
    <property type="protein sequence ID" value="AAC63109.1"/>
    <property type="molecule type" value="mRNA"/>
</dbReference>
<dbReference type="EMBL" id="AF059294">
    <property type="protein sequence ID" value="AAC14444.1"/>
    <property type="molecule type" value="mRNA"/>
</dbReference>
<dbReference type="EMBL" id="AC007396">
    <property type="protein sequence ID" value="AAF26761.1"/>
    <property type="molecule type" value="Genomic_DNA"/>
</dbReference>
<dbReference type="EMBL" id="CP002684">
    <property type="protein sequence ID" value="AEE35780.1"/>
    <property type="molecule type" value="Genomic_DNA"/>
</dbReference>
<dbReference type="EMBL" id="AY080884">
    <property type="protein sequence ID" value="AAL87354.1"/>
    <property type="molecule type" value="mRNA"/>
</dbReference>
<dbReference type="EMBL" id="AY113971">
    <property type="protein sequence ID" value="AAM45019.1"/>
    <property type="molecule type" value="mRNA"/>
</dbReference>
<dbReference type="EMBL" id="U70034">
    <property type="protein sequence ID" value="AAB38862.1"/>
    <property type="status" value="ALT_INIT"/>
    <property type="molecule type" value="mRNA"/>
</dbReference>
<dbReference type="PIR" id="T51309">
    <property type="entry name" value="T51309"/>
</dbReference>
<dbReference type="RefSeq" id="NP_565123.1">
    <property type="nucleotide sequence ID" value="NM_106245.5"/>
</dbReference>
<dbReference type="PDB" id="2P1M">
    <property type="method" value="X-ray"/>
    <property type="resolution" value="1.80 A"/>
    <property type="chains" value="A=1-160"/>
</dbReference>
<dbReference type="PDB" id="2P1N">
    <property type="method" value="X-ray"/>
    <property type="resolution" value="2.50 A"/>
    <property type="chains" value="A/D=1-160"/>
</dbReference>
<dbReference type="PDB" id="2P1O">
    <property type="method" value="X-ray"/>
    <property type="resolution" value="1.90 A"/>
    <property type="chains" value="A=1-160"/>
</dbReference>
<dbReference type="PDB" id="2P1P">
    <property type="method" value="X-ray"/>
    <property type="resolution" value="2.21 A"/>
    <property type="chains" value="A=1-160"/>
</dbReference>
<dbReference type="PDB" id="2P1Q">
    <property type="method" value="X-ray"/>
    <property type="resolution" value="1.91 A"/>
    <property type="chains" value="A=1-160"/>
</dbReference>
<dbReference type="PDB" id="3C6N">
    <property type="method" value="X-ray"/>
    <property type="resolution" value="2.60 A"/>
    <property type="chains" value="A=1-160"/>
</dbReference>
<dbReference type="PDB" id="3C6O">
    <property type="method" value="X-ray"/>
    <property type="resolution" value="2.70 A"/>
    <property type="chains" value="A=1-160"/>
</dbReference>
<dbReference type="PDB" id="3C6P">
    <property type="method" value="X-ray"/>
    <property type="resolution" value="2.70 A"/>
    <property type="chains" value="A=1-160"/>
</dbReference>
<dbReference type="PDB" id="3OGK">
    <property type="method" value="X-ray"/>
    <property type="resolution" value="2.80 A"/>
    <property type="chains" value="A/C/E/G/I/K/M/O=1-160"/>
</dbReference>
<dbReference type="PDB" id="3OGL">
    <property type="method" value="X-ray"/>
    <property type="resolution" value="3.18 A"/>
    <property type="chains" value="A/C/E/G/I/K/M/O=1-160"/>
</dbReference>
<dbReference type="PDB" id="3OGM">
    <property type="method" value="X-ray"/>
    <property type="resolution" value="3.34 A"/>
    <property type="chains" value="A/C/E/G/I/K/M/O=1-160"/>
</dbReference>
<dbReference type="PDB" id="5HYW">
    <property type="method" value="X-ray"/>
    <property type="resolution" value="3.01 A"/>
    <property type="chains" value="B/D=1-160"/>
</dbReference>
<dbReference type="PDB" id="5HZG">
    <property type="method" value="X-ray"/>
    <property type="resolution" value="3.30 A"/>
    <property type="chains" value="C/G=1-160"/>
</dbReference>
<dbReference type="PDB" id="6BRO">
    <property type="method" value="X-ray"/>
    <property type="resolution" value="2.50 A"/>
    <property type="chains" value="A/C=1-160"/>
</dbReference>
<dbReference type="PDB" id="6BRP">
    <property type="method" value="X-ray"/>
    <property type="resolution" value="2.39 A"/>
    <property type="chains" value="A/C=1-160"/>
</dbReference>
<dbReference type="PDB" id="6BRQ">
    <property type="method" value="X-ray"/>
    <property type="resolution" value="2.99 A"/>
    <property type="chains" value="A/C=1-160"/>
</dbReference>
<dbReference type="PDB" id="7SA1">
    <property type="method" value="X-ray"/>
    <property type="resolution" value="3.21 A"/>
    <property type="chains" value="A/C=1-160"/>
</dbReference>
<dbReference type="PDBsum" id="2P1M"/>
<dbReference type="PDBsum" id="2P1N"/>
<dbReference type="PDBsum" id="2P1O"/>
<dbReference type="PDBsum" id="2P1P"/>
<dbReference type="PDBsum" id="2P1Q"/>
<dbReference type="PDBsum" id="3C6N"/>
<dbReference type="PDBsum" id="3C6O"/>
<dbReference type="PDBsum" id="3C6P"/>
<dbReference type="PDBsum" id="3OGK"/>
<dbReference type="PDBsum" id="3OGL"/>
<dbReference type="PDBsum" id="3OGM"/>
<dbReference type="PDBsum" id="5HYW"/>
<dbReference type="PDBsum" id="5HZG"/>
<dbReference type="PDBsum" id="6BRO"/>
<dbReference type="PDBsum" id="6BRP"/>
<dbReference type="PDBsum" id="6BRQ"/>
<dbReference type="PDBsum" id="7SA1"/>
<dbReference type="SMR" id="Q39255"/>
<dbReference type="BioGRID" id="29147">
    <property type="interactions" value="141"/>
</dbReference>
<dbReference type="ComplexPortal" id="CPX-1339">
    <property type="entry name" value="SCF(COI1) ubiquitin ligase complex, variant CUL1-RBX1A-SKP1A"/>
</dbReference>
<dbReference type="ComplexPortal" id="CPX-1343">
    <property type="entry name" value="SCF(TIR1) ubiquitin ligase complex, variant CUL1-RBX1A-SKP1A"/>
</dbReference>
<dbReference type="ComplexPortal" id="CPX-1449">
    <property type="entry name" value="SCF(COI1) ubiquitin ligase complex, variant CUL1-RBX1B-SKP1A"/>
</dbReference>
<dbReference type="ComplexPortal" id="CPX-1471">
    <property type="entry name" value="SCF(COI1) ubiquitin ligase complex, variant CUL2-RBX1A-SKP1A"/>
</dbReference>
<dbReference type="ComplexPortal" id="CPX-1492">
    <property type="entry name" value="SCF(COI1) ubiquitin ligase complex, variant CUL2-RBX1B-SKP1A"/>
</dbReference>
<dbReference type="ComplexPortal" id="CPX-1535">
    <property type="entry name" value="SCF(TIR1) ubiquitin ligase complex, variant CUL1-RBX1B-SKP1A"/>
</dbReference>
<dbReference type="ComplexPortal" id="CPX-1557">
    <property type="entry name" value="SCF(TIR1) ubiquitin ligase complex, variant CUL2-RBX1A-SKP1A"/>
</dbReference>
<dbReference type="ComplexPortal" id="CPX-1578">
    <property type="entry name" value="SCF(TIR1) ubiquitin ligase complex, variant CUL2-RBX1B-SKP1A"/>
</dbReference>
<dbReference type="DIP" id="DIP-31325N"/>
<dbReference type="FunCoup" id="Q39255">
    <property type="interactions" value="3632"/>
</dbReference>
<dbReference type="IntAct" id="Q39255">
    <property type="interactions" value="76"/>
</dbReference>
<dbReference type="STRING" id="3702.Q39255"/>
<dbReference type="iPTMnet" id="Q39255"/>
<dbReference type="SwissPalm" id="Q39255"/>
<dbReference type="PaxDb" id="3702-AT1G75950.1"/>
<dbReference type="ProteomicsDB" id="234585"/>
<dbReference type="EnsemblPlants" id="AT1G75950.1">
    <property type="protein sequence ID" value="AT1G75950.1"/>
    <property type="gene ID" value="AT1G75950"/>
</dbReference>
<dbReference type="GeneID" id="843928"/>
<dbReference type="Gramene" id="AT1G75950.1">
    <property type="protein sequence ID" value="AT1G75950.1"/>
    <property type="gene ID" value="AT1G75950"/>
</dbReference>
<dbReference type="KEGG" id="ath:AT1G75950"/>
<dbReference type="Araport" id="AT1G75950"/>
<dbReference type="TAIR" id="AT1G75950">
    <property type="gene designation" value="SKP1"/>
</dbReference>
<dbReference type="eggNOG" id="KOG1724">
    <property type="taxonomic scope" value="Eukaryota"/>
</dbReference>
<dbReference type="HOGENOM" id="CLU_059252_6_1_1"/>
<dbReference type="InParanoid" id="Q39255"/>
<dbReference type="OMA" id="IAIPGCK"/>
<dbReference type="OrthoDB" id="7827685at2759"/>
<dbReference type="PhylomeDB" id="Q39255"/>
<dbReference type="UniPathway" id="UPA00143"/>
<dbReference type="CD-CODE" id="4299E36E">
    <property type="entry name" value="Nucleolus"/>
</dbReference>
<dbReference type="EvolutionaryTrace" id="Q39255"/>
<dbReference type="PRO" id="PR:Q39255"/>
<dbReference type="Proteomes" id="UP000006548">
    <property type="component" value="Chromosome 1"/>
</dbReference>
<dbReference type="ExpressionAtlas" id="Q39255">
    <property type="expression patterns" value="baseline and differential"/>
</dbReference>
<dbReference type="GO" id="GO:0005829">
    <property type="term" value="C:cytosol"/>
    <property type="evidence" value="ECO:0007005"/>
    <property type="project" value="TAIR"/>
</dbReference>
<dbReference type="GO" id="GO:0005739">
    <property type="term" value="C:mitochondrion"/>
    <property type="evidence" value="ECO:0007005"/>
    <property type="project" value="TAIR"/>
</dbReference>
<dbReference type="GO" id="GO:0005634">
    <property type="term" value="C:nucleus"/>
    <property type="evidence" value="ECO:0000314"/>
    <property type="project" value="TAIR"/>
</dbReference>
<dbReference type="GO" id="GO:0009524">
    <property type="term" value="C:phragmoplast"/>
    <property type="evidence" value="ECO:0000314"/>
    <property type="project" value="TAIR"/>
</dbReference>
<dbReference type="GO" id="GO:0019005">
    <property type="term" value="C:SCF ubiquitin ligase complex"/>
    <property type="evidence" value="ECO:0000314"/>
    <property type="project" value="ComplexPortal"/>
</dbReference>
<dbReference type="GO" id="GO:0005819">
    <property type="term" value="C:spindle"/>
    <property type="evidence" value="ECO:0000314"/>
    <property type="project" value="TAIR"/>
</dbReference>
<dbReference type="GO" id="GO:0009734">
    <property type="term" value="P:auxin-activated signaling pathway"/>
    <property type="evidence" value="ECO:0000303"/>
    <property type="project" value="ComplexPortal"/>
</dbReference>
<dbReference type="GO" id="GO:0007059">
    <property type="term" value="P:chromosome segregation"/>
    <property type="evidence" value="ECO:0007669"/>
    <property type="project" value="UniProtKB-KW"/>
</dbReference>
<dbReference type="GO" id="GO:0009873">
    <property type="term" value="P:ethylene-activated signaling pathway"/>
    <property type="evidence" value="ECO:0007669"/>
    <property type="project" value="UniProtKB-KW"/>
</dbReference>
<dbReference type="GO" id="GO:0009867">
    <property type="term" value="P:jasmonic acid mediated signaling pathway"/>
    <property type="evidence" value="ECO:0000315"/>
    <property type="project" value="ComplexPortal"/>
</dbReference>
<dbReference type="GO" id="GO:0000226">
    <property type="term" value="P:microtubule cytoskeleton organization"/>
    <property type="evidence" value="ECO:0000315"/>
    <property type="project" value="TAIR"/>
</dbReference>
<dbReference type="GO" id="GO:0045910">
    <property type="term" value="P:negative regulation of DNA recombination"/>
    <property type="evidence" value="ECO:0000315"/>
    <property type="project" value="TAIR"/>
</dbReference>
<dbReference type="GO" id="GO:0016567">
    <property type="term" value="P:protein ubiquitination"/>
    <property type="evidence" value="ECO:0007669"/>
    <property type="project" value="UniProtKB-UniPathway"/>
</dbReference>
<dbReference type="GO" id="GO:0009733">
    <property type="term" value="P:response to auxin"/>
    <property type="evidence" value="ECO:0000303"/>
    <property type="project" value="ComplexPortal"/>
</dbReference>
<dbReference type="GO" id="GO:0009753">
    <property type="term" value="P:response to jasmonic acid"/>
    <property type="evidence" value="ECO:0000315"/>
    <property type="project" value="ComplexPortal"/>
</dbReference>
<dbReference type="GO" id="GO:0006511">
    <property type="term" value="P:ubiquitin-dependent protein catabolic process"/>
    <property type="evidence" value="ECO:0007669"/>
    <property type="project" value="InterPro"/>
</dbReference>
<dbReference type="CDD" id="cd18322">
    <property type="entry name" value="BTB_POZ_SKP1"/>
    <property type="match status" value="1"/>
</dbReference>
<dbReference type="FunFam" id="3.30.710.10:FF:000057">
    <property type="entry name" value="SKP1-like protein 1A"/>
    <property type="match status" value="1"/>
</dbReference>
<dbReference type="Gene3D" id="3.30.710.10">
    <property type="entry name" value="Potassium Channel Kv1.1, Chain A"/>
    <property type="match status" value="1"/>
</dbReference>
<dbReference type="InterPro" id="IPR016897">
    <property type="entry name" value="SKP1"/>
</dbReference>
<dbReference type="InterPro" id="IPR001232">
    <property type="entry name" value="SKP1-like"/>
</dbReference>
<dbReference type="InterPro" id="IPR036296">
    <property type="entry name" value="SKP1-like_dim_sf"/>
</dbReference>
<dbReference type="InterPro" id="IPR011333">
    <property type="entry name" value="SKP1/BTB/POZ_sf"/>
</dbReference>
<dbReference type="InterPro" id="IPR016072">
    <property type="entry name" value="Skp1_comp_dimer"/>
</dbReference>
<dbReference type="InterPro" id="IPR016073">
    <property type="entry name" value="Skp1_comp_POZ"/>
</dbReference>
<dbReference type="PANTHER" id="PTHR11165">
    <property type="entry name" value="SKP1"/>
    <property type="match status" value="1"/>
</dbReference>
<dbReference type="Pfam" id="PF01466">
    <property type="entry name" value="Skp1"/>
    <property type="match status" value="1"/>
</dbReference>
<dbReference type="Pfam" id="PF03931">
    <property type="entry name" value="Skp1_POZ"/>
    <property type="match status" value="1"/>
</dbReference>
<dbReference type="PIRSF" id="PIRSF028729">
    <property type="entry name" value="E3_ubiquit_lig_SCF_Skp"/>
    <property type="match status" value="1"/>
</dbReference>
<dbReference type="SMART" id="SM00512">
    <property type="entry name" value="Skp1"/>
    <property type="match status" value="1"/>
</dbReference>
<dbReference type="SUPFAM" id="SSF54695">
    <property type="entry name" value="POZ domain"/>
    <property type="match status" value="1"/>
</dbReference>
<dbReference type="SUPFAM" id="SSF81382">
    <property type="entry name" value="Skp1 dimerisation domain-like"/>
    <property type="match status" value="1"/>
</dbReference>
<keyword id="KW-0002">3D-structure</keyword>
<keyword id="KW-0927">Auxin signaling pathway</keyword>
<keyword id="KW-0159">Chromosome partition</keyword>
<keyword id="KW-0963">Cytoplasm</keyword>
<keyword id="KW-0206">Cytoskeleton</keyword>
<keyword id="KW-0217">Developmental protein</keyword>
<keyword id="KW-0936">Ethylene signaling pathway</keyword>
<keyword id="KW-0945">Host-virus interaction</keyword>
<keyword id="KW-0539">Nucleus</keyword>
<keyword id="KW-1185">Reference proteome</keyword>
<keyword id="KW-0833">Ubl conjugation pathway</keyword>
<organism>
    <name type="scientific">Arabidopsis thaliana</name>
    <name type="common">Mouse-ear cress</name>
    <dbReference type="NCBI Taxonomy" id="3702"/>
    <lineage>
        <taxon>Eukaryota</taxon>
        <taxon>Viridiplantae</taxon>
        <taxon>Streptophyta</taxon>
        <taxon>Embryophyta</taxon>
        <taxon>Tracheophyta</taxon>
        <taxon>Spermatophyta</taxon>
        <taxon>Magnoliopsida</taxon>
        <taxon>eudicotyledons</taxon>
        <taxon>Gunneridae</taxon>
        <taxon>Pentapetalae</taxon>
        <taxon>rosids</taxon>
        <taxon>malvids</taxon>
        <taxon>Brassicales</taxon>
        <taxon>Brassicaceae</taxon>
        <taxon>Camelineae</taxon>
        <taxon>Arabidopsis</taxon>
    </lineage>
</organism>
<accession>Q39255</accession>
<accession>P92992</accession>
<gene>
    <name evidence="37" type="primary">SKP1A</name>
    <name evidence="35" type="synonym">ASK1</name>
    <name evidence="38" type="synonym">SKP1</name>
    <name evidence="36" type="synonym">UIP1</name>
    <name evidence="40" type="ordered locus">At1g75950</name>
    <name evidence="41" type="ORF">T4O12.17</name>
</gene>
<proteinExistence type="evidence at protein level"/>
<sequence length="160" mass="17857">MSAKKIVLKSSDGESFEVEEAVALESQTIAHMVEDDCVDNGVPLPNVTSKILAKVIEYCKRHVEAAASKAEAVEGAATSDDDLKAWDADFMKIDQATLFELILAANYLNIKNLLDLTCQTVADMIKGKTPEEIRTTFNIKNDFTPEEEEEVRRENQWAFE</sequence>
<evidence type="ECO:0000269" key="1">
    <source>
    </source>
</evidence>
<evidence type="ECO:0000269" key="2">
    <source>
    </source>
</evidence>
<evidence type="ECO:0000269" key="3">
    <source>
    </source>
</evidence>
<evidence type="ECO:0000269" key="4">
    <source>
    </source>
</evidence>
<evidence type="ECO:0000269" key="5">
    <source>
    </source>
</evidence>
<evidence type="ECO:0000269" key="6">
    <source>
    </source>
</evidence>
<evidence type="ECO:0000269" key="7">
    <source>
    </source>
</evidence>
<evidence type="ECO:0000269" key="8">
    <source>
    </source>
</evidence>
<evidence type="ECO:0000269" key="9">
    <source>
    </source>
</evidence>
<evidence type="ECO:0000269" key="10">
    <source>
    </source>
</evidence>
<evidence type="ECO:0000269" key="11">
    <source>
    </source>
</evidence>
<evidence type="ECO:0000269" key="12">
    <source>
    </source>
</evidence>
<evidence type="ECO:0000269" key="13">
    <source>
    </source>
</evidence>
<evidence type="ECO:0000269" key="14">
    <source>
    </source>
</evidence>
<evidence type="ECO:0000269" key="15">
    <source>
    </source>
</evidence>
<evidence type="ECO:0000269" key="16">
    <source>
    </source>
</evidence>
<evidence type="ECO:0000269" key="17">
    <source>
    </source>
</evidence>
<evidence type="ECO:0000269" key="18">
    <source>
    </source>
</evidence>
<evidence type="ECO:0000269" key="19">
    <source>
    </source>
</evidence>
<evidence type="ECO:0000269" key="20">
    <source>
    </source>
</evidence>
<evidence type="ECO:0000269" key="21">
    <source>
    </source>
</evidence>
<evidence type="ECO:0000269" key="22">
    <source>
    </source>
</evidence>
<evidence type="ECO:0000269" key="23">
    <source>
    </source>
</evidence>
<evidence type="ECO:0000269" key="24">
    <source>
    </source>
</evidence>
<evidence type="ECO:0000269" key="25">
    <source>
    </source>
</evidence>
<evidence type="ECO:0000269" key="26">
    <source>
    </source>
</evidence>
<evidence type="ECO:0000269" key="27">
    <source>
    </source>
</evidence>
<evidence type="ECO:0000269" key="28">
    <source>
    </source>
</evidence>
<evidence type="ECO:0000269" key="29">
    <source>
    </source>
</evidence>
<evidence type="ECO:0000269" key="30">
    <source>
    </source>
</evidence>
<evidence type="ECO:0000269" key="31">
    <source>
    </source>
</evidence>
<evidence type="ECO:0000269" key="32">
    <source>
    </source>
</evidence>
<evidence type="ECO:0000269" key="33">
    <source>
    </source>
</evidence>
<evidence type="ECO:0000269" key="34">
    <source>
    </source>
</evidence>
<evidence type="ECO:0000303" key="35">
    <source>
    </source>
</evidence>
<evidence type="ECO:0000303" key="36">
    <source>
    </source>
</evidence>
<evidence type="ECO:0000303" key="37">
    <source>
    </source>
</evidence>
<evidence type="ECO:0000303" key="38">
    <source>
    </source>
</evidence>
<evidence type="ECO:0000305" key="39"/>
<evidence type="ECO:0000312" key="40">
    <source>
        <dbReference type="Araport" id="AT1G75950"/>
    </source>
</evidence>
<evidence type="ECO:0000312" key="41">
    <source>
        <dbReference type="EMBL" id="AAF26761.1"/>
    </source>
</evidence>
<evidence type="ECO:0007829" key="42">
    <source>
        <dbReference type="PDB" id="2P1M"/>
    </source>
</evidence>
<evidence type="ECO:0007829" key="43">
    <source>
        <dbReference type="PDB" id="2P1N"/>
    </source>
</evidence>
<evidence type="ECO:0007829" key="44">
    <source>
        <dbReference type="PDB" id="2P1O"/>
    </source>
</evidence>
<evidence type="ECO:0007829" key="45">
    <source>
        <dbReference type="PDB" id="3OGK"/>
    </source>
</evidence>
<evidence type="ECO:0007829" key="46">
    <source>
        <dbReference type="PDB" id="5HZG"/>
    </source>
</evidence>
<evidence type="ECO:0007829" key="47">
    <source>
        <dbReference type="PDB" id="6BRP"/>
    </source>
</evidence>
<feature type="chain" id="PRO_0000187255" description="SKP1-like protein 1A">
    <location>
        <begin position="1"/>
        <end position="160"/>
    </location>
</feature>
<feature type="region of interest" description="Interaction with the F-box domain of F-box proteins" evidence="24">
    <location>
        <begin position="102"/>
        <end position="160"/>
    </location>
</feature>
<feature type="sequence conflict" description="In Ref. 7; AAB38862." evidence="39" ref="7">
    <original>P</original>
    <variation>L</variation>
    <location>
        <position position="43"/>
    </location>
</feature>
<feature type="strand" evidence="44">
    <location>
        <begin position="6"/>
        <end position="9"/>
    </location>
</feature>
<feature type="strand" evidence="43">
    <location>
        <begin position="11"/>
        <end position="13"/>
    </location>
</feature>
<feature type="strand" evidence="44">
    <location>
        <begin position="15"/>
        <end position="18"/>
    </location>
</feature>
<feature type="helix" evidence="42">
    <location>
        <begin position="21"/>
        <end position="24"/>
    </location>
</feature>
<feature type="turn" evidence="42">
    <location>
        <begin position="27"/>
        <end position="29"/>
    </location>
</feature>
<feature type="turn" evidence="45">
    <location>
        <begin position="31"/>
        <end position="36"/>
    </location>
</feature>
<feature type="helix" evidence="45">
    <location>
        <begin position="37"/>
        <end position="40"/>
    </location>
</feature>
<feature type="helix" evidence="42">
    <location>
        <begin position="49"/>
        <end position="57"/>
    </location>
</feature>
<feature type="helix" evidence="47">
    <location>
        <begin position="81"/>
        <end position="85"/>
    </location>
</feature>
<feature type="helix" evidence="47">
    <location>
        <begin position="87"/>
        <end position="90"/>
    </location>
</feature>
<feature type="strand" evidence="46">
    <location>
        <begin position="94"/>
        <end position="96"/>
    </location>
</feature>
<feature type="helix" evidence="42">
    <location>
        <begin position="102"/>
        <end position="107"/>
    </location>
</feature>
<feature type="helix" evidence="42">
    <location>
        <begin position="111"/>
        <end position="123"/>
    </location>
</feature>
<feature type="turn" evidence="42">
    <location>
        <begin position="124"/>
        <end position="127"/>
    </location>
</feature>
<feature type="helix" evidence="42">
    <location>
        <begin position="130"/>
        <end position="136"/>
    </location>
</feature>
<feature type="helix" evidence="42">
    <location>
        <begin position="145"/>
        <end position="159"/>
    </location>
</feature>
<protein>
    <recommendedName>
        <fullName evidence="37">SKP1-like protein 1A</fullName>
        <shortName evidence="37">SKP1-like 1</shortName>
    </recommendedName>
    <alternativeName>
        <fullName evidence="36">UFO-binding protein 1</fullName>
    </alternativeName>
</protein>
<reference key="1">
    <citation type="journal article" date="1996" name="Cell">
        <title>Budding yeast SKP1 encodes an evolutionarily conserved kinetochore protein required for cell cycle progression.</title>
        <authorList>
            <person name="Connelly C."/>
            <person name="Hieter P."/>
        </authorList>
    </citation>
    <scope>NUCLEOTIDE SEQUENCE [MRNA]</scope>
</reference>
<reference key="2">
    <citation type="journal article" date="1999" name="Plant J.">
        <title>The UNUSUAL FLORAL ORGANS gene of Arabidopsis thaliana is an F-box protein required for normal patterning and growth in the floral meristem.</title>
        <authorList>
            <person name="Samach A."/>
            <person name="Klenz J.E."/>
            <person name="Kohalmi S.E."/>
            <person name="Risseeuw E."/>
            <person name="Haughn G.W."/>
            <person name="Crosby W.L."/>
        </authorList>
    </citation>
    <scope>NUCLEOTIDE SEQUENCE [MRNA]</scope>
    <scope>TISSUE SPECIFICITY</scope>
    <scope>INTERACTION WITH UFO</scope>
    <source>
        <strain>cv. Columbia</strain>
    </source>
</reference>
<reference key="3">
    <citation type="journal article" date="2000" name="Mol. Gen. Genet.">
        <title>Overexpression of Arabidopsis thaliana SKP1 homologues in yeast inactivates the Mig1 repressor by destabilising the F-box protein Grr1.</title>
        <authorList>
            <person name="Schouten J."/>
            <person name="de Kam R.J."/>
            <person name="Fetter K."/>
            <person name="Hoge J.H.C."/>
        </authorList>
    </citation>
    <scope>NUCLEOTIDE SEQUENCE [MRNA]</scope>
    <source>
        <strain>cv. Landsberg erecta</strain>
    </source>
</reference>
<reference key="4">
    <citation type="journal article" date="2000" name="Nature">
        <title>Sequence and analysis of chromosome 1 of the plant Arabidopsis thaliana.</title>
        <authorList>
            <person name="Theologis A."/>
            <person name="Ecker J.R."/>
            <person name="Palm C.J."/>
            <person name="Federspiel N.A."/>
            <person name="Kaul S."/>
            <person name="White O."/>
            <person name="Alonso J."/>
            <person name="Altafi H."/>
            <person name="Araujo R."/>
            <person name="Bowman C.L."/>
            <person name="Brooks S.Y."/>
            <person name="Buehler E."/>
            <person name="Chan A."/>
            <person name="Chao Q."/>
            <person name="Chen H."/>
            <person name="Cheuk R.F."/>
            <person name="Chin C.W."/>
            <person name="Chung M.K."/>
            <person name="Conn L."/>
            <person name="Conway A.B."/>
            <person name="Conway A.R."/>
            <person name="Creasy T.H."/>
            <person name="Dewar K."/>
            <person name="Dunn P."/>
            <person name="Etgu P."/>
            <person name="Feldblyum T.V."/>
            <person name="Feng J.-D."/>
            <person name="Fong B."/>
            <person name="Fujii C.Y."/>
            <person name="Gill J.E."/>
            <person name="Goldsmith A.D."/>
            <person name="Haas B."/>
            <person name="Hansen N.F."/>
            <person name="Hughes B."/>
            <person name="Huizar L."/>
            <person name="Hunter J.L."/>
            <person name="Jenkins J."/>
            <person name="Johnson-Hopson C."/>
            <person name="Khan S."/>
            <person name="Khaykin E."/>
            <person name="Kim C.J."/>
            <person name="Koo H.L."/>
            <person name="Kremenetskaia I."/>
            <person name="Kurtz D.B."/>
            <person name="Kwan A."/>
            <person name="Lam B."/>
            <person name="Langin-Hooper S."/>
            <person name="Lee A."/>
            <person name="Lee J.M."/>
            <person name="Lenz C.A."/>
            <person name="Li J.H."/>
            <person name="Li Y.-P."/>
            <person name="Lin X."/>
            <person name="Liu S.X."/>
            <person name="Liu Z.A."/>
            <person name="Luros J.S."/>
            <person name="Maiti R."/>
            <person name="Marziali A."/>
            <person name="Militscher J."/>
            <person name="Miranda M."/>
            <person name="Nguyen M."/>
            <person name="Nierman W.C."/>
            <person name="Osborne B.I."/>
            <person name="Pai G."/>
            <person name="Peterson J."/>
            <person name="Pham P.K."/>
            <person name="Rizzo M."/>
            <person name="Rooney T."/>
            <person name="Rowley D."/>
            <person name="Sakano H."/>
            <person name="Salzberg S.L."/>
            <person name="Schwartz J.R."/>
            <person name="Shinn P."/>
            <person name="Southwick A.M."/>
            <person name="Sun H."/>
            <person name="Tallon L.J."/>
            <person name="Tambunga G."/>
            <person name="Toriumi M.J."/>
            <person name="Town C.D."/>
            <person name="Utterback T."/>
            <person name="Van Aken S."/>
            <person name="Vaysberg M."/>
            <person name="Vysotskaia V.S."/>
            <person name="Walker M."/>
            <person name="Wu D."/>
            <person name="Yu G."/>
            <person name="Fraser C.M."/>
            <person name="Venter J.C."/>
            <person name="Davis R.W."/>
        </authorList>
    </citation>
    <scope>NUCLEOTIDE SEQUENCE [LARGE SCALE GENOMIC DNA]</scope>
    <source>
        <strain>cv. Columbia</strain>
    </source>
</reference>
<reference key="5">
    <citation type="journal article" date="2017" name="Plant J.">
        <title>Araport11: a complete reannotation of the Arabidopsis thaliana reference genome.</title>
        <authorList>
            <person name="Cheng C.Y."/>
            <person name="Krishnakumar V."/>
            <person name="Chan A.P."/>
            <person name="Thibaud-Nissen F."/>
            <person name="Schobel S."/>
            <person name="Town C.D."/>
        </authorList>
    </citation>
    <scope>GENOME REANNOTATION</scope>
    <source>
        <strain>cv. Columbia</strain>
    </source>
</reference>
<reference key="6">
    <citation type="journal article" date="2003" name="Science">
        <title>Empirical analysis of transcriptional activity in the Arabidopsis genome.</title>
        <authorList>
            <person name="Yamada K."/>
            <person name="Lim J."/>
            <person name="Dale J.M."/>
            <person name="Chen H."/>
            <person name="Shinn P."/>
            <person name="Palm C.J."/>
            <person name="Southwick A.M."/>
            <person name="Wu H.C."/>
            <person name="Kim C.J."/>
            <person name="Nguyen M."/>
            <person name="Pham P.K."/>
            <person name="Cheuk R.F."/>
            <person name="Karlin-Newmann G."/>
            <person name="Liu S.X."/>
            <person name="Lam B."/>
            <person name="Sakano H."/>
            <person name="Wu T."/>
            <person name="Yu G."/>
            <person name="Miranda M."/>
            <person name="Quach H.L."/>
            <person name="Tripp M."/>
            <person name="Chang C.H."/>
            <person name="Lee J.M."/>
            <person name="Toriumi M.J."/>
            <person name="Chan M.M."/>
            <person name="Tang C.C."/>
            <person name="Onodera C.S."/>
            <person name="Deng J.M."/>
            <person name="Akiyama K."/>
            <person name="Ansari Y."/>
            <person name="Arakawa T."/>
            <person name="Banh J."/>
            <person name="Banno F."/>
            <person name="Bowser L."/>
            <person name="Brooks S.Y."/>
            <person name="Carninci P."/>
            <person name="Chao Q."/>
            <person name="Choy N."/>
            <person name="Enju A."/>
            <person name="Goldsmith A.D."/>
            <person name="Gurjal M."/>
            <person name="Hansen N.F."/>
            <person name="Hayashizaki Y."/>
            <person name="Johnson-Hopson C."/>
            <person name="Hsuan V.W."/>
            <person name="Iida K."/>
            <person name="Karnes M."/>
            <person name="Khan S."/>
            <person name="Koesema E."/>
            <person name="Ishida J."/>
            <person name="Jiang P.X."/>
            <person name="Jones T."/>
            <person name="Kawai J."/>
            <person name="Kamiya A."/>
            <person name="Meyers C."/>
            <person name="Nakajima M."/>
            <person name="Narusaka M."/>
            <person name="Seki M."/>
            <person name="Sakurai T."/>
            <person name="Satou M."/>
            <person name="Tamse R."/>
            <person name="Vaysberg M."/>
            <person name="Wallender E.K."/>
            <person name="Wong C."/>
            <person name="Yamamura Y."/>
            <person name="Yuan S."/>
            <person name="Shinozaki K."/>
            <person name="Davis R.W."/>
            <person name="Theologis A."/>
            <person name="Ecker J.R."/>
        </authorList>
    </citation>
    <scope>NUCLEOTIDE SEQUENCE [LARGE SCALE MRNA]</scope>
    <source>
        <strain>cv. Columbia</strain>
    </source>
</reference>
<reference key="7">
    <citation type="journal article" date="1998" name="Planta">
        <title>Arabidopsis SKP1, a homologue of a cell cycle regulator gene, is predominantly expressed in meristematic cells.</title>
        <authorList>
            <person name="Porat R."/>
            <person name="Lu P."/>
            <person name="O'Neill S.D."/>
        </authorList>
    </citation>
    <scope>NUCLEOTIDE SEQUENCE [MRNA] OF 13-160</scope>
    <scope>DEVELOPMENTAL STAGE</scope>
    <scope>TISSUE SPECIFICITY</scope>
    <source>
        <strain>cv. Columbia</strain>
    </source>
</reference>
<reference key="8">
    <citation type="journal article" date="1999" name="Dev. Genet.">
        <title>The ASK1 gene regulates development and interacts with the UFO gene to control floral organ identity in Arabidopsis.</title>
        <authorList>
            <person name="Zhao D."/>
            <person name="Yang M."/>
            <person name="Solava J."/>
            <person name="Ma H."/>
        </authorList>
    </citation>
    <scope>FUNCTION</scope>
</reference>
<reference key="9">
    <citation type="journal article" date="1999" name="Genes Dev.">
        <title>Identification of an SCF ubiquitin-ligase complex required for auxin response in Arabidopsis thaliana.</title>
        <authorList>
            <person name="Gray W.M."/>
            <person name="del Pozo J.C."/>
            <person name="Walker L."/>
            <person name="Hobbie L."/>
            <person name="Risseeuw E."/>
            <person name="Banks T."/>
            <person name="Crosby W.L."/>
            <person name="Yang M."/>
            <person name="Ma H."/>
            <person name="Estelle M."/>
        </authorList>
    </citation>
    <scope>FUNCTION</scope>
    <scope>INTERACTION WITH TIR1</scope>
</reference>
<reference key="10">
    <citation type="journal article" date="1999" name="Proc. Natl. Acad. Sci. U.S.A.">
        <title>The Arabidopsis SKP1-LIKE1 gene is essential for male meiosis and may control homologue separation.</title>
        <authorList>
            <person name="Yang M."/>
            <person name="Hu Y."/>
            <person name="Lodhi M."/>
            <person name="McCombie W.R."/>
            <person name="Ma H."/>
        </authorList>
    </citation>
    <scope>FUNCTION</scope>
</reference>
<reference key="11">
    <citation type="journal article" date="2001" name="Development">
        <title>The ASK1 gene regulates B function gene expression in cooperation with UFO and LEAFY in Arabidopsis.</title>
        <authorList>
            <person name="Zhao D."/>
            <person name="Yu Q."/>
            <person name="Chen M."/>
            <person name="Ma H."/>
        </authorList>
    </citation>
    <scope>FUNCTION</scope>
</reference>
<reference key="12">
    <citation type="journal article" date="2001" name="EMBO J.">
        <title>SKP1-SnRK protein kinase interactions mediate proteasomal binding of a plant SCF ubiquitin ligase.</title>
        <authorList>
            <person name="Farras R."/>
            <person name="Ferrando A."/>
            <person name="Jasik J."/>
            <person name="Kleinow T."/>
            <person name="Oekresz L."/>
            <person name="Tiburcio A."/>
            <person name="Salchert K."/>
            <person name="del Pozo C."/>
            <person name="Schell J."/>
            <person name="Koncz C."/>
        </authorList>
    </citation>
    <scope>SUBCELLULAR LOCATION</scope>
    <scope>INTERACTION WITH SKIP1; SKIP2; SKIP3; SKIP4; SKIP6; FIB1; CUL1; PAD1; KIN10 AND KIN11</scope>
</reference>
<reference key="13">
    <citation type="journal article" date="2001" name="Genes Dev.">
        <title>EID1, an F-box protein involved in phytochrome A-specific light signaling.</title>
        <authorList>
            <person name="Dieterle M."/>
            <person name="Zhou Y.-C."/>
            <person name="Schaefer E."/>
            <person name="Funk M."/>
            <person name="Kretsch T."/>
        </authorList>
    </citation>
    <scope>INTERACTION WITH EID1</scope>
</reference>
<reference key="14">
    <citation type="journal article" date="2001" name="Plant Cell">
        <title>ORE9, an F-box protein that regulates leaf senescence in Arabidopsis.</title>
        <authorList>
            <person name="Woo H.R."/>
            <person name="Chung K.M."/>
            <person name="Park J.-H."/>
            <person name="Oh S.A."/>
            <person name="Ahn T."/>
            <person name="Hong S.H."/>
            <person name="Jang S.K."/>
            <person name="Nam H.G."/>
        </authorList>
    </citation>
    <scope>INTERACTION WITH ORE9</scope>
</reference>
<reference key="15">
    <citation type="journal article" date="2002" name="J. Biol. Chem.">
        <title>The AtRbx1 protein is part of plant SCF complexes, and its down-regulation causes severe growth and developmental defects.</title>
        <authorList>
            <person name="Lechner E."/>
            <person name="Xie D."/>
            <person name="Grava S."/>
            <person name="Pigaglio E."/>
            <person name="Planchais S."/>
            <person name="Murray J.A.H."/>
            <person name="Parmentier Y."/>
            <person name="Mutterer J."/>
            <person name="Dubreucq B."/>
            <person name="Shen W.-H."/>
            <person name="Genschik P."/>
        </authorList>
    </citation>
    <scope>IDENTIFICATION IN A SCF COMPLEX</scope>
</reference>
<reference key="16">
    <citation type="journal article" date="2002" name="Plant Cell">
        <title>The SCF(COI1) ubiquitin-ligase complexes are required for jasmonate response in Arabidopsis.</title>
        <authorList>
            <person name="Xu L."/>
            <person name="Liu F."/>
            <person name="Lechner E."/>
            <person name="Genschik P."/>
            <person name="Crosby W.L."/>
            <person name="Ma H."/>
            <person name="Peng W."/>
            <person name="Huang D."/>
            <person name="Xie D."/>
        </authorList>
    </citation>
    <scope>INTERACTION WITH COI1</scope>
    <scope>IDENTIFICATION IN A SCF(COI1) COMPLEX</scope>
</reference>
<reference key="17">
    <citation type="journal article" date="2002" name="Plant J.">
        <title>COI1 links jasmonate signalling and fertility to the SCF ubiquitin-ligase complex in Arabidopsis.</title>
        <authorList>
            <person name="Devoto A."/>
            <person name="Nieto-Rostro M."/>
            <person name="Xie D."/>
            <person name="Ellis C."/>
            <person name="Harmston R."/>
            <person name="Patrick E."/>
            <person name="Davis J."/>
            <person name="Sherratt L."/>
            <person name="Coleman M."/>
            <person name="Turner J.G."/>
        </authorList>
    </citation>
    <scope>INTERACTION WITH COI1</scope>
    <scope>IDENTIFICATION IN A SCF(COI1) COMPLEX</scope>
</reference>
<reference key="18">
    <citation type="journal article" date="2002" name="Proc. Natl. Acad. Sci. U.S.A.">
        <title>The F-box subunit of the SCF E3 complex is encoded by a diverse superfamily of genes in Arabidopsis.</title>
        <authorList>
            <person name="Gagne J.M."/>
            <person name="Downes B.P."/>
            <person name="Shiu S.-H."/>
            <person name="Durski A.M."/>
            <person name="Vierstra R.D."/>
        </authorList>
    </citation>
    <scope>INTERACTION WITH UFO; PP2A13; AT1G67340; AT4G38940; SKIP15; AT3G04660; AT1G78100; AT1G55000; SKIP16; SKIP2; SKIP32 AND EBF1</scope>
</reference>
<reference key="19">
    <citation type="journal article" date="2003" name="Cell">
        <title>Plant responses to ethylene gas are mediated by SCF(EBF1/EBF2)-dependent proteolysis of EIN3 transcription factor.</title>
        <authorList>
            <person name="Guo H."/>
            <person name="Ecker J.R."/>
        </authorList>
    </citation>
    <scope>INTERACTION WITH EBF1 AND EBF2</scope>
</reference>
<reference key="20">
    <citation type="journal article" date="2003" name="Curr. Biol.">
        <title>The F box protein AFR is a positive regulator of phytochrome A-mediated light signaling.</title>
        <authorList>
            <person name="Harmon F.G."/>
            <person name="Kay S.A."/>
        </authorList>
    </citation>
    <scope>INTERACTION WITH AFR</scope>
</reference>
<reference key="21">
    <citation type="journal article" date="2003" name="Plant J.">
        <title>Protein interaction analysis of SCF ubiquitin E3 ligase subunits from Arabidopsis.</title>
        <authorList>
            <person name="Risseeuw E.P."/>
            <person name="Daskalchuk T.E."/>
            <person name="Banks T.W."/>
            <person name="Liu E."/>
            <person name="Cotelesage J."/>
            <person name="Hellmann H."/>
            <person name="Estelle M."/>
            <person name="Somers D.E."/>
            <person name="Crosby W.L."/>
        </authorList>
    </citation>
    <scope>INTERACTION WITH EID1; SKIP1; SKIP6; SKIP8; PP2A13/SKIP9; PP2A11/SKIP10; SKIP11; PP2B11/SKIP12; PP2A14/SKIP13; SKIP14; SKIP19/FBL20; SKIP20; PP2B1/SKIP21; SKIP22; SKIP23; SKIP24; SKIP25; TULP10/SKIP26; SKIP27; SKIP28/MEE11; AFR/SKIP29; SKIP30; SKIP31; SKIP32/FBP7; SKIP33 AND SKIP35</scope>
</reference>
<reference key="22">
    <citation type="journal article" date="2003" name="Proc. Natl. Acad. Sci. U.S.A.">
        <title>The F-box-containing protein UFO and AGAMOUS participate in antagonistic pathways governing early petal development in Arabidopsis.</title>
        <authorList>
            <person name="Durfee T."/>
            <person name="Roe J.L."/>
            <person name="Sessions R.A."/>
            <person name="Inouye C."/>
            <person name="Serikawa K."/>
            <person name="Feldmann K.A."/>
            <person name="Weigel D."/>
            <person name="Zambryski P.C."/>
        </authorList>
    </citation>
    <scope>INTERACTION WITH UFO</scope>
</reference>
<reference key="23">
    <citation type="journal article" date="2003" name="Plant Physiol.">
        <title>Members of the Arabidopsis-SKP1-like gene family exhibit a variety of expression patterns and may play diverse roles in Arabidopsis.</title>
        <authorList>
            <person name="Zhao D."/>
            <person name="Ni W."/>
            <person name="Feng B."/>
            <person name="Han T."/>
            <person name="Petrasek M.G."/>
            <person name="Ma H."/>
        </authorList>
    </citation>
    <scope>FUNCTION</scope>
    <scope>TISSUE SPECIFICITY</scope>
</reference>
<reference key="24">
    <citation type="journal article" date="2004" name="J. Exp. Bot.">
        <title>Identification of ASK and clock-associated proteins as molecular partners of LKP2 (LOV kelch protein 2) in Arabidopsis.</title>
        <authorList>
            <person name="Yasuhara M."/>
            <person name="Mitsui S."/>
            <person name="Hirano H."/>
            <person name="Takanabe R."/>
            <person name="Tokioka Y."/>
            <person name="Ihara N."/>
            <person name="Komatsu A."/>
            <person name="Seki M."/>
            <person name="Shinozaki K."/>
            <person name="Kiyosue T."/>
        </authorList>
    </citation>
    <scope>INTERACTION WITH ADO1; ADO2 AND ADO3</scope>
</reference>
<reference key="25">
    <citation type="journal article" date="2004" name="Nature">
        <title>Involvement of targeted proteolysis in plant genetic transformation by Agrobacterium.</title>
        <authorList>
            <person name="Tzfira T."/>
            <person name="Vaidya M."/>
            <person name="Citovsky V."/>
        </authorList>
    </citation>
    <scope>INTERACTION WITH AGROBACTERIUM VIRF</scope>
</reference>
<reference key="26">
    <citation type="journal article" date="2004" name="Plant Cell">
        <title>The ASK1 and ASK2 genes are essential for Arabidopsis early development.</title>
        <authorList>
            <person name="Liu F."/>
            <person name="Ni W."/>
            <person name="Griffith M.E."/>
            <person name="Huang Z."/>
            <person name="Chang C."/>
            <person name="Peng W."/>
            <person name="Ma H."/>
            <person name="Xie D."/>
        </authorList>
    </citation>
    <scope>FUNCTION</scope>
    <scope>TISSUE SPECIFICITY</scope>
</reference>
<reference key="27">
    <citation type="journal article" date="2004" name="Plant Cell Physiol.">
        <title>Expression and interaction analysis of Arabidopsis Skp1-related genes.</title>
        <authorList>
            <person name="Takahashi N."/>
            <person name="Kuroda H."/>
            <person name="Kuromori T."/>
            <person name="Hirayama T."/>
            <person name="Seki M."/>
            <person name="Shinozaki K."/>
            <person name="Shimada H."/>
            <person name="Matsui M."/>
        </authorList>
    </citation>
    <scope>TISSUE SPECIFICITY</scope>
    <scope>INTERACTION WITH EBF1/FBL6; COI1/FBL2; ADO3/FKF1; AT3G61590 AND AT5G49610</scope>
</reference>
<reference key="28">
    <citation type="journal article" date="2004" name="Plant J.">
        <title>Formation of an SCF(ZTL) complex is required for proper regulation of circadian timing.</title>
        <authorList>
            <person name="Han L."/>
            <person name="Mason M."/>
            <person name="Risseeuw E.P."/>
            <person name="Crosby W.L."/>
            <person name="Somers D.E."/>
        </authorList>
    </citation>
    <scope>INTERACTION WITH ADO1</scope>
</reference>
<reference key="29">
    <citation type="journal article" date="2006" name="Proc. Natl. Acad. Sci. U.S.A.">
        <title>F-box-like domain in the polerovirus protein P0 is required for silencing suppressor function.</title>
        <authorList>
            <person name="Pazhouhandeh M."/>
            <person name="Dieterle M."/>
            <person name="Marrocco K."/>
            <person name="Lechner E."/>
            <person name="Berry B."/>
            <person name="Brault V."/>
            <person name="Hemmer O."/>
            <person name="Kretsch T."/>
            <person name="Richards K.E."/>
            <person name="Genschik P."/>
            <person name="Ziegler-Graff V."/>
        </authorList>
    </citation>
    <scope>INTERACTION WITH TURNIP YELLOWS VIRUS PROTEIN P0</scope>
    <scope>IDENTIFICATION IN A SCF P0 COMPLEX</scope>
</reference>
<reference key="30">
    <citation type="journal article" date="2008" name="Nature">
        <title>Control of plant germline proliferation by SCF(FBL17) degradation of cell cycle inhibitors.</title>
        <authorList>
            <person name="Kim H.J."/>
            <person name="Oh S.A."/>
            <person name="Brownfield L."/>
            <person name="Hong S.H."/>
            <person name="Ryu H."/>
            <person name="Hwang I."/>
            <person name="Twell D."/>
            <person name="Nam H.G."/>
        </authorList>
    </citation>
    <scope>INTERACTION WITH FBL17</scope>
</reference>
<reference key="31">
    <citation type="journal article" date="2008" name="Plant J.">
        <title>SKP2A, an F-box protein that regulates cell division, is degraded via the ubiquitin pathway.</title>
        <authorList>
            <person name="Jurado S."/>
            <person name="Diaz-Trivino S."/>
            <person name="Abraham Z."/>
            <person name="Manzano C."/>
            <person name="Gutierrez C."/>
            <person name="del Pozo C."/>
        </authorList>
    </citation>
    <scope>INTERACTION WITH SKP2A</scope>
</reference>
<reference key="32">
    <citation type="journal article" date="2008" name="Plant Physiol.">
        <title>F-box protein DOR functions as a novel inhibitory factor for abscisic acid-induced stomatal closure under drought stress in Arabidopsis.</title>
        <authorList>
            <person name="Zhang Y."/>
            <person name="Xu W."/>
            <person name="Li Z."/>
            <person name="Deng X.W."/>
            <person name="Wu W."/>
            <person name="Xue Y."/>
        </authorList>
    </citation>
    <scope>INTERACTION WITH DOR</scope>
</reference>
<reference key="33">
    <citation type="journal article" date="2009" name="Plant J.">
        <title>An F-box gene, CPR30, functions as a negative regulator of the defense response in Arabidopsis.</title>
        <authorList>
            <person name="Gou M."/>
            <person name="Su N."/>
            <person name="Zheng J."/>
            <person name="Huai J."/>
            <person name="Wu G."/>
            <person name="Zhao J."/>
            <person name="He J."/>
            <person name="Tang D."/>
            <person name="Yang S."/>
            <person name="Wang G."/>
        </authorList>
    </citation>
    <scope>INTERACTION WITH CPR1/CPR30</scope>
</reference>
<reference key="34">
    <citation type="journal article" date="2010" name="Cell Host Microbe">
        <title>Agrobacterium induces expression of a host F-box protein required for tumorigenicity.</title>
        <authorList>
            <person name="Zaltsman A."/>
            <person name="Krichevsky A."/>
            <person name="Loyter A."/>
            <person name="Citovsky V."/>
        </authorList>
    </citation>
    <scope>INTERACTION WITH VBF</scope>
</reference>
<reference key="35">
    <citation type="journal article" date="2017" name="Mol. Cell">
        <title>The F-box protein KIB1 mediates brassinosteroid-induced inactivation and degradation of GSK3-like kinases in Arabidopsis.</title>
        <authorList>
            <person name="Zhu J.-Y."/>
            <person name="Li Y."/>
            <person name="Cao D.-M."/>
            <person name="Yang H."/>
            <person name="Oh E."/>
            <person name="Bi Y."/>
            <person name="Zhu S."/>
            <person name="Wang Z.-Y."/>
        </authorList>
    </citation>
    <scope>INTERACTION WITH KIB1</scope>
    <source>
        <strain>cv. Columbia</strain>
        <strain>cv. Wassilewskija</strain>
    </source>
</reference>
<reference key="36">
    <citation type="journal article" date="2007" name="Nature">
        <title>Mechanism of auxin perception by the TIR1 ubiquitin ligase.</title>
        <authorList>
            <person name="Tan X."/>
            <person name="Calderon-Villalobos L.I.A."/>
            <person name="Sharon M."/>
            <person name="Zheng C."/>
            <person name="Robinson C.V."/>
            <person name="Estelle M."/>
            <person name="Zheng N."/>
        </authorList>
    </citation>
    <scope>X-RAY CRYSTALLOGRAPHY (1.8 ANGSTROMS) IN COMPLEX WITH TIR1; AUXIN; AUX/IAA POLYPEPTIDE SUBSTRATE; AUXIN ANALOGS AND MYO-INOSITOL HEXAKISPHOSPHATE</scope>
</reference>
<reference key="37">
    <citation type="journal article" date="2008" name="Proc. Natl. Acad. Sci. U.S.A.">
        <title>Small-molecule agonists and antagonists of F-box protein-substrate interactions in auxin perception and signaling.</title>
        <authorList>
            <person name="Hayashi K."/>
            <person name="Tan X."/>
            <person name="Zheng N."/>
            <person name="Hatate T."/>
            <person name="Kimura Y."/>
            <person name="Kepinski S."/>
            <person name="Nozaki H."/>
        </authorList>
    </citation>
    <scope>X-RAY CRYSTALLOGRAPHY (2.6 ANGSTROMS) IN COMPLEX WITH SKP1A; AUX/IAA POLYPEPTIDE SUBSTRATE; AUXIN; AUXIN AGONISTS; AUXIN ANTAGONISTS AND MYO-INOSITOL HEXAKISPHOSPHATE</scope>
</reference>
<reference key="38">
    <citation type="journal article" date="2010" name="Nature">
        <title>Jasmonate perception by inositol-phosphate-potentiated COI1-JAZ co-receptor.</title>
        <authorList>
            <person name="Sheard L.B."/>
            <person name="Tan X."/>
            <person name="Mao H."/>
            <person name="Withers J."/>
            <person name="Ben-Nissan G."/>
            <person name="Hinds T.R."/>
            <person name="Kobayashi Y."/>
            <person name="Hsu F.F."/>
            <person name="Sharon M."/>
            <person name="Browse J."/>
            <person name="He S.Y."/>
            <person name="Rizo J."/>
            <person name="Howe G.A."/>
            <person name="Zheng N."/>
        </authorList>
    </citation>
    <scope>X-RAY CRYSTALLOGRAPHY (2.80 ANGSTROMS) OF 1-160</scope>
    <scope>INTERACTION WITH COI1</scope>
</reference>
<reference key="39">
    <citation type="journal article" date="2013" name="PLoS ONE">
        <title>Arabidopsis TRANSCURVATA1 encodes NUP58, a component of the nucleopore central channel.</title>
        <authorList>
            <person name="Ferrandez-Ayela A."/>
            <person name="Alonso-Peral M.M."/>
            <person name="Sanchez-Garcia A.B."/>
            <person name="Micol-Ponce R."/>
            <person name="Perez-Perez J.M."/>
            <person name="Micol J.L."/>
            <person name="Ponce M.R."/>
        </authorList>
    </citation>
    <scope>INTERACTION WITH NUP58</scope>
</reference>
<name>SKP1A_ARATH</name>